<sequence>MTTFYTVISWLSVFGYWLLIAGVTLRILMKRRAVPSAMAWLLIIYILPLVGIIAYLSFGELHLGKRRAERAKAMWPSTARWLSELKECQHIFANSNSEVASPLFQLCERRQGINGVKGNQLQLLTTTDDTLKALVRDIELARHNIEMVFYIWQPGGLVDQVAESLMAAARRGVHCRLLLDSAGSKQFFRSPYPAMMRNAGIEVVEALKVNVFRMFLRRMDLRQHRKIVLIDNYVAYTGSMNMVDPRFFKQDAGVGQWIDMMARMEGPVATTLGIVYACDWEIETGKRILPPPPDANIMPFEEETGHTIQVIASGPGFPEEMIHQALLTAVYAAREQLIMTTPYFVPSDDLLHAICTAAQRGVDVSIIVPRENDSMMVRWASRAFFTELLNAGVKIYQFEGGLLHSKSVLVDGQLSLVGTVNLDMRSLWLNFEITLVIDDDGFGADLAQVQDDYIARSALLDGERWNKRPLWHRVTERLFYFFSPLL</sequence>
<protein>
    <recommendedName>
        <fullName evidence="1">Cardiolipin synthase A</fullName>
        <shortName evidence="1">CL synthase</shortName>
        <ecNumber evidence="1">2.7.8.-</ecNumber>
    </recommendedName>
</protein>
<comment type="function">
    <text evidence="1">Catalyzes the reversible phosphatidyl group transfer from one phosphatidylglycerol molecule to another to form cardiolipin (CL) (diphosphatidylglycerol) and glycerol.</text>
</comment>
<comment type="catalytic activity">
    <reaction evidence="1">
        <text>2 a 1,2-diacyl-sn-glycero-3-phospho-(1'-sn-glycerol) = a cardiolipin + glycerol</text>
        <dbReference type="Rhea" id="RHEA:31451"/>
        <dbReference type="ChEBI" id="CHEBI:17754"/>
        <dbReference type="ChEBI" id="CHEBI:62237"/>
        <dbReference type="ChEBI" id="CHEBI:64716"/>
    </reaction>
</comment>
<comment type="subcellular location">
    <subcellularLocation>
        <location evidence="1">Cell inner membrane</location>
        <topology evidence="1">Multi-pass membrane protein</topology>
    </subcellularLocation>
</comment>
<comment type="similarity">
    <text evidence="1">Belongs to the phospholipase D family. Cardiolipin synthase subfamily. ClsA sub-subfamily.</text>
</comment>
<gene>
    <name evidence="1" type="primary">clsA</name>
    <name type="synonym">cls</name>
    <name type="ordered locus">YpAngola_A2156</name>
</gene>
<proteinExistence type="inferred from homology"/>
<organism>
    <name type="scientific">Yersinia pestis bv. Antiqua (strain Angola)</name>
    <dbReference type="NCBI Taxonomy" id="349746"/>
    <lineage>
        <taxon>Bacteria</taxon>
        <taxon>Pseudomonadati</taxon>
        <taxon>Pseudomonadota</taxon>
        <taxon>Gammaproteobacteria</taxon>
        <taxon>Enterobacterales</taxon>
        <taxon>Yersiniaceae</taxon>
        <taxon>Yersinia</taxon>
    </lineage>
</organism>
<evidence type="ECO:0000255" key="1">
    <source>
        <dbReference type="HAMAP-Rule" id="MF_00190"/>
    </source>
</evidence>
<reference key="1">
    <citation type="journal article" date="2010" name="J. Bacteriol.">
        <title>Genome sequence of the deep-rooted Yersinia pestis strain Angola reveals new insights into the evolution and pangenome of the plague bacterium.</title>
        <authorList>
            <person name="Eppinger M."/>
            <person name="Worsham P.L."/>
            <person name="Nikolich M.P."/>
            <person name="Riley D.R."/>
            <person name="Sebastian Y."/>
            <person name="Mou S."/>
            <person name="Achtman M."/>
            <person name="Lindler L.E."/>
            <person name="Ravel J."/>
        </authorList>
    </citation>
    <scope>NUCLEOTIDE SEQUENCE [LARGE SCALE GENOMIC DNA]</scope>
    <source>
        <strain>Angola</strain>
    </source>
</reference>
<feature type="chain" id="PRO_1000098921" description="Cardiolipin synthase A">
    <location>
        <begin position="1"/>
        <end position="486"/>
    </location>
</feature>
<feature type="transmembrane region" description="Helical" evidence="1">
    <location>
        <begin position="3"/>
        <end position="23"/>
    </location>
</feature>
<feature type="transmembrane region" description="Helical" evidence="1">
    <location>
        <begin position="38"/>
        <end position="58"/>
    </location>
</feature>
<feature type="domain" description="PLD phosphodiesterase 1" evidence="1">
    <location>
        <begin position="219"/>
        <end position="246"/>
    </location>
</feature>
<feature type="domain" description="PLD phosphodiesterase 2" evidence="1">
    <location>
        <begin position="399"/>
        <end position="426"/>
    </location>
</feature>
<feature type="active site" evidence="1">
    <location>
        <position position="224"/>
    </location>
</feature>
<feature type="active site" evidence="1">
    <location>
        <position position="226"/>
    </location>
</feature>
<feature type="active site" evidence="1">
    <location>
        <position position="231"/>
    </location>
</feature>
<feature type="active site" evidence="1">
    <location>
        <position position="404"/>
    </location>
</feature>
<feature type="active site" evidence="1">
    <location>
        <position position="406"/>
    </location>
</feature>
<feature type="active site" evidence="1">
    <location>
        <position position="411"/>
    </location>
</feature>
<name>CLSA_YERPG</name>
<accession>A9R8K8</accession>
<keyword id="KW-0997">Cell inner membrane</keyword>
<keyword id="KW-1003">Cell membrane</keyword>
<keyword id="KW-0444">Lipid biosynthesis</keyword>
<keyword id="KW-0443">Lipid metabolism</keyword>
<keyword id="KW-0472">Membrane</keyword>
<keyword id="KW-0594">Phospholipid biosynthesis</keyword>
<keyword id="KW-1208">Phospholipid metabolism</keyword>
<keyword id="KW-0677">Repeat</keyword>
<keyword id="KW-0808">Transferase</keyword>
<keyword id="KW-0812">Transmembrane</keyword>
<keyword id="KW-1133">Transmembrane helix</keyword>
<dbReference type="EC" id="2.7.8.-" evidence="1"/>
<dbReference type="EMBL" id="CP000901">
    <property type="protein sequence ID" value="ABX85745.1"/>
    <property type="molecule type" value="Genomic_DNA"/>
</dbReference>
<dbReference type="RefSeq" id="WP_002210648.1">
    <property type="nucleotide sequence ID" value="NZ_CP009935.1"/>
</dbReference>
<dbReference type="SMR" id="A9R8K8"/>
<dbReference type="GeneID" id="57976479"/>
<dbReference type="KEGG" id="ypg:YpAngola_A2156"/>
<dbReference type="PATRIC" id="fig|349746.12.peg.3148"/>
<dbReference type="GO" id="GO:0005886">
    <property type="term" value="C:plasma membrane"/>
    <property type="evidence" value="ECO:0007669"/>
    <property type="project" value="UniProtKB-SubCell"/>
</dbReference>
<dbReference type="GO" id="GO:0008808">
    <property type="term" value="F:cardiolipin synthase activity"/>
    <property type="evidence" value="ECO:0007669"/>
    <property type="project" value="InterPro"/>
</dbReference>
<dbReference type="GO" id="GO:0032049">
    <property type="term" value="P:cardiolipin biosynthetic process"/>
    <property type="evidence" value="ECO:0007669"/>
    <property type="project" value="InterPro"/>
</dbReference>
<dbReference type="CDD" id="cd09152">
    <property type="entry name" value="PLDc_EcCLS_like_1"/>
    <property type="match status" value="1"/>
</dbReference>
<dbReference type="CDD" id="cd09158">
    <property type="entry name" value="PLDc_EcCLS_like_2"/>
    <property type="match status" value="1"/>
</dbReference>
<dbReference type="FunFam" id="3.30.870.10:FF:000002">
    <property type="entry name" value="Cardiolipin synthase A"/>
    <property type="match status" value="1"/>
</dbReference>
<dbReference type="FunFam" id="3.30.870.10:FF:000003">
    <property type="entry name" value="Cardiolipin synthase A"/>
    <property type="match status" value="1"/>
</dbReference>
<dbReference type="Gene3D" id="3.30.870.10">
    <property type="entry name" value="Endonuclease Chain A"/>
    <property type="match status" value="2"/>
</dbReference>
<dbReference type="HAMAP" id="MF_00190">
    <property type="entry name" value="Cardiolipin_synth_ClsA"/>
    <property type="match status" value="1"/>
</dbReference>
<dbReference type="InterPro" id="IPR022924">
    <property type="entry name" value="Cardiolipin_synthase"/>
</dbReference>
<dbReference type="InterPro" id="IPR030840">
    <property type="entry name" value="CL_synthase_A"/>
</dbReference>
<dbReference type="InterPro" id="IPR027379">
    <property type="entry name" value="CLS_N"/>
</dbReference>
<dbReference type="InterPro" id="IPR025202">
    <property type="entry name" value="PLD-like_dom"/>
</dbReference>
<dbReference type="InterPro" id="IPR001736">
    <property type="entry name" value="PLipase_D/transphosphatidylase"/>
</dbReference>
<dbReference type="NCBIfam" id="TIGR04265">
    <property type="entry name" value="bac_cardiolipin"/>
    <property type="match status" value="1"/>
</dbReference>
<dbReference type="PANTHER" id="PTHR21248">
    <property type="entry name" value="CARDIOLIPIN SYNTHASE"/>
    <property type="match status" value="1"/>
</dbReference>
<dbReference type="PANTHER" id="PTHR21248:SF22">
    <property type="entry name" value="PHOSPHOLIPASE D"/>
    <property type="match status" value="1"/>
</dbReference>
<dbReference type="Pfam" id="PF13091">
    <property type="entry name" value="PLDc_2"/>
    <property type="match status" value="2"/>
</dbReference>
<dbReference type="Pfam" id="PF13396">
    <property type="entry name" value="PLDc_N"/>
    <property type="match status" value="1"/>
</dbReference>
<dbReference type="SMART" id="SM00155">
    <property type="entry name" value="PLDc"/>
    <property type="match status" value="2"/>
</dbReference>
<dbReference type="SUPFAM" id="SSF56024">
    <property type="entry name" value="Phospholipase D/nuclease"/>
    <property type="match status" value="2"/>
</dbReference>
<dbReference type="PROSITE" id="PS50035">
    <property type="entry name" value="PLD"/>
    <property type="match status" value="2"/>
</dbReference>